<dbReference type="EC" id="2.4.1.21" evidence="1"/>
<dbReference type="EMBL" id="CP000450">
    <property type="protein sequence ID" value="ABI58880.1"/>
    <property type="molecule type" value="Genomic_DNA"/>
</dbReference>
<dbReference type="RefSeq" id="WP_011633721.1">
    <property type="nucleotide sequence ID" value="NC_008344.1"/>
</dbReference>
<dbReference type="SMR" id="Q0AIE6"/>
<dbReference type="STRING" id="335283.Neut_0608"/>
<dbReference type="CAZy" id="GT5">
    <property type="family name" value="Glycosyltransferase Family 5"/>
</dbReference>
<dbReference type="KEGG" id="net:Neut_0608"/>
<dbReference type="eggNOG" id="COG0297">
    <property type="taxonomic scope" value="Bacteria"/>
</dbReference>
<dbReference type="HOGENOM" id="CLU_009583_18_2_4"/>
<dbReference type="OrthoDB" id="9808590at2"/>
<dbReference type="UniPathway" id="UPA00164"/>
<dbReference type="Proteomes" id="UP000001966">
    <property type="component" value="Chromosome"/>
</dbReference>
<dbReference type="GO" id="GO:0009011">
    <property type="term" value="F:alpha-1,4-glucan glucosyltransferase (ADP-glucose donor) activity"/>
    <property type="evidence" value="ECO:0007669"/>
    <property type="project" value="UniProtKB-UniRule"/>
</dbReference>
<dbReference type="GO" id="GO:0004373">
    <property type="term" value="F:alpha-1,4-glucan glucosyltransferase (UDP-glucose donor) activity"/>
    <property type="evidence" value="ECO:0007669"/>
    <property type="project" value="InterPro"/>
</dbReference>
<dbReference type="GO" id="GO:0005978">
    <property type="term" value="P:glycogen biosynthetic process"/>
    <property type="evidence" value="ECO:0007669"/>
    <property type="project" value="UniProtKB-UniRule"/>
</dbReference>
<dbReference type="CDD" id="cd03791">
    <property type="entry name" value="GT5_Glycogen_synthase_DULL1-like"/>
    <property type="match status" value="1"/>
</dbReference>
<dbReference type="Gene3D" id="3.40.50.2000">
    <property type="entry name" value="Glycogen Phosphorylase B"/>
    <property type="match status" value="2"/>
</dbReference>
<dbReference type="HAMAP" id="MF_00484">
    <property type="entry name" value="Glycogen_synth"/>
    <property type="match status" value="1"/>
</dbReference>
<dbReference type="InterPro" id="IPR001296">
    <property type="entry name" value="Glyco_trans_1"/>
</dbReference>
<dbReference type="InterPro" id="IPR011835">
    <property type="entry name" value="GS/SS"/>
</dbReference>
<dbReference type="InterPro" id="IPR013534">
    <property type="entry name" value="Starch_synth_cat_dom"/>
</dbReference>
<dbReference type="NCBIfam" id="TIGR02095">
    <property type="entry name" value="glgA"/>
    <property type="match status" value="1"/>
</dbReference>
<dbReference type="NCBIfam" id="NF001899">
    <property type="entry name" value="PRK00654.1-2"/>
    <property type="match status" value="1"/>
</dbReference>
<dbReference type="PANTHER" id="PTHR45825:SF11">
    <property type="entry name" value="ALPHA AMYLASE DOMAIN-CONTAINING PROTEIN"/>
    <property type="match status" value="1"/>
</dbReference>
<dbReference type="PANTHER" id="PTHR45825">
    <property type="entry name" value="GRANULE-BOUND STARCH SYNTHASE 1, CHLOROPLASTIC/AMYLOPLASTIC"/>
    <property type="match status" value="1"/>
</dbReference>
<dbReference type="Pfam" id="PF08323">
    <property type="entry name" value="Glyco_transf_5"/>
    <property type="match status" value="1"/>
</dbReference>
<dbReference type="Pfam" id="PF00534">
    <property type="entry name" value="Glycos_transf_1"/>
    <property type="match status" value="1"/>
</dbReference>
<dbReference type="SUPFAM" id="SSF53756">
    <property type="entry name" value="UDP-Glycosyltransferase/glycogen phosphorylase"/>
    <property type="match status" value="1"/>
</dbReference>
<accession>Q0AIE6</accession>
<evidence type="ECO:0000255" key="1">
    <source>
        <dbReference type="HAMAP-Rule" id="MF_00484"/>
    </source>
</evidence>
<proteinExistence type="inferred from homology"/>
<keyword id="KW-0320">Glycogen biosynthesis</keyword>
<keyword id="KW-0328">Glycosyltransferase</keyword>
<keyword id="KW-0808">Transferase</keyword>
<name>GLGA_NITEC</name>
<comment type="function">
    <text evidence="1">Synthesizes alpha-1,4-glucan chains using ADP-glucose.</text>
</comment>
<comment type="catalytic activity">
    <reaction evidence="1">
        <text>[(1-&gt;4)-alpha-D-glucosyl](n) + ADP-alpha-D-glucose = [(1-&gt;4)-alpha-D-glucosyl](n+1) + ADP + H(+)</text>
        <dbReference type="Rhea" id="RHEA:18189"/>
        <dbReference type="Rhea" id="RHEA-COMP:9584"/>
        <dbReference type="Rhea" id="RHEA-COMP:9587"/>
        <dbReference type="ChEBI" id="CHEBI:15378"/>
        <dbReference type="ChEBI" id="CHEBI:15444"/>
        <dbReference type="ChEBI" id="CHEBI:57498"/>
        <dbReference type="ChEBI" id="CHEBI:456216"/>
        <dbReference type="EC" id="2.4.1.21"/>
    </reaction>
</comment>
<comment type="pathway">
    <text evidence="1">Glycan biosynthesis; glycogen biosynthesis.</text>
</comment>
<comment type="similarity">
    <text evidence="1">Belongs to the glycosyltransferase 1 family. Bacterial/plant glycogen synthase subfamily.</text>
</comment>
<sequence>MPSSSPRKNIRVLFVTPEVFPLCKTGGLGDVSAALPVALRALKMDARLLLPGYPAVLAGLKSRRKVATFDLQPHFPPATLLSSRLQINESVSVPLYVIHCPALYQRTGGIYLDDTGQDWPDNAQRFGLLSKIGALLASDASPLAWVPDIVHCNDWQSGLTPAYLHFHSGKKAASLITLHNLAFQGNFPSDEVAKLGLPDESFSMHGAEFYGNLSFLKAGIYYSDHISTVSPGYAREIQQEPLGFGLQGLLAKRSDDITGIVNGIDTAIWNPATDPYLVKKYTSRNLSAKAANKLALQQTMGLENNQAIPLFGTVSRLTHQKGSDIMLQVAPMLADLPAQLALLGSGDALLEQQLAALAQAFPTKIAVRIGYDEALSHLINAGTDCFLMPSRFEPCGLNQMYSQHYGTPPVVHATGGLMDTVVDLTPETLADKSASGFHFHEMTADSFMEGIKRAINAYHNTRLWKNLQRNGMQKDFSWQASASAYQSIYSLLMQKNRPASTA</sequence>
<gene>
    <name evidence="1" type="primary">glgA</name>
    <name type="ordered locus">Neut_0608</name>
</gene>
<protein>
    <recommendedName>
        <fullName evidence="1">Glycogen synthase</fullName>
        <ecNumber evidence="1">2.4.1.21</ecNumber>
    </recommendedName>
    <alternativeName>
        <fullName evidence="1">Starch [bacterial glycogen] synthase</fullName>
    </alternativeName>
</protein>
<feature type="chain" id="PRO_1000014370" description="Glycogen synthase">
    <location>
        <begin position="1"/>
        <end position="502"/>
    </location>
</feature>
<feature type="binding site" evidence="1">
    <location>
        <position position="24"/>
    </location>
    <ligand>
        <name>ADP-alpha-D-glucose</name>
        <dbReference type="ChEBI" id="CHEBI:57498"/>
    </ligand>
</feature>
<organism>
    <name type="scientific">Nitrosomonas eutropha (strain DSM 101675 / C91 / Nm57)</name>
    <dbReference type="NCBI Taxonomy" id="335283"/>
    <lineage>
        <taxon>Bacteria</taxon>
        <taxon>Pseudomonadati</taxon>
        <taxon>Pseudomonadota</taxon>
        <taxon>Betaproteobacteria</taxon>
        <taxon>Nitrosomonadales</taxon>
        <taxon>Nitrosomonadaceae</taxon>
        <taxon>Nitrosomonas</taxon>
    </lineage>
</organism>
<reference key="1">
    <citation type="journal article" date="2007" name="Environ. Microbiol.">
        <title>Whole-genome analysis of the ammonia-oxidizing bacterium, Nitrosomonas eutropha C91: implications for niche adaptation.</title>
        <authorList>
            <person name="Stein L.Y."/>
            <person name="Arp D.J."/>
            <person name="Berube P.M."/>
            <person name="Chain P.S."/>
            <person name="Hauser L."/>
            <person name="Jetten M.S."/>
            <person name="Klotz M.G."/>
            <person name="Larimer F.W."/>
            <person name="Norton J.M."/>
            <person name="Op den Camp H.J.M."/>
            <person name="Shin M."/>
            <person name="Wei X."/>
        </authorList>
    </citation>
    <scope>NUCLEOTIDE SEQUENCE [LARGE SCALE GENOMIC DNA]</scope>
    <source>
        <strain>DSM 101675 / C91 / Nm57</strain>
    </source>
</reference>